<organism>
    <name type="scientific">Pan troglodytes</name>
    <name type="common">Chimpanzee</name>
    <dbReference type="NCBI Taxonomy" id="9598"/>
    <lineage>
        <taxon>Eukaryota</taxon>
        <taxon>Metazoa</taxon>
        <taxon>Chordata</taxon>
        <taxon>Craniata</taxon>
        <taxon>Vertebrata</taxon>
        <taxon>Euteleostomi</taxon>
        <taxon>Mammalia</taxon>
        <taxon>Eutheria</taxon>
        <taxon>Euarchontoglires</taxon>
        <taxon>Primates</taxon>
        <taxon>Haplorrhini</taxon>
        <taxon>Catarrhini</taxon>
        <taxon>Hominidae</taxon>
        <taxon>Pan</taxon>
    </lineage>
</organism>
<sequence length="479" mass="53089">MAWNTNLRWRLPLTCLLLQVVMVILFGVFVRYDFEADAHWWSERTHKNLSDVENEFYYRYPSFQDVHVMVFVGFGFLMTFLQRYGFSAVGFNFLLAAFGIQWALLMQGWFHFLQGRYIVVGVENLINADFCVASVCVAFGAVLGKVSPIQLLIMTFFQVTLFAVNEFILLNLLKVKDAGGSMTIHTFGAYFGLTVTRILYRRNLEQSKERQNSVYQSDLFAMIGTLFLWMYWPSFNSAISYHGDSQHRAAINTYCSLAACVLTSVAISSALHKKGKLDMVHIQNATLAGGVAVGTAAEMMLMPYGALIIGFVCGIISTLGFVYLTPFLESRLHIQDTCGINNLHGIPGIIGGIVGAVTAASASLEVYGKEGLVHSFDFQGFKGDWTARTQGKFQIYGLLVTLAMALMGGIIVGLILRLPFWGQPSDENCFEDAVYWEMPEGNSTVYIPEDPTFKPSGPSVPSVPMVSPLPMASSVPLVP</sequence>
<keyword id="KW-0924">Ammonia transport</keyword>
<keyword id="KW-1003">Cell membrane</keyword>
<keyword id="KW-0325">Glycoprotein</keyword>
<keyword id="KW-0472">Membrane</keyword>
<keyword id="KW-1185">Reference proteome</keyword>
<keyword id="KW-0812">Transmembrane</keyword>
<keyword id="KW-1133">Transmembrane helix</keyword>
<keyword id="KW-0813">Transport</keyword>
<protein>
    <recommendedName>
        <fullName>Ammonium transporter Rh type C</fullName>
    </recommendedName>
    <alternativeName>
        <fullName>Rhesus blood group family type C glycoprotein</fullName>
        <shortName>Rh family type C glycoprotein</shortName>
        <shortName>Rh type C glycoprotein</shortName>
    </alternativeName>
</protein>
<feature type="chain" id="PRO_0000283580" description="Ammonium transporter Rh type C">
    <location>
        <begin position="1"/>
        <end position="479"/>
    </location>
</feature>
<feature type="topological domain" description="Cytoplasmic" evidence="3">
    <location>
        <begin position="1"/>
        <end position="9"/>
    </location>
</feature>
<feature type="transmembrane region" description="Helical" evidence="3">
    <location>
        <begin position="10"/>
        <end position="30"/>
    </location>
</feature>
<feature type="topological domain" description="Extracellular" evidence="3">
    <location>
        <begin position="31"/>
        <end position="60"/>
    </location>
</feature>
<feature type="transmembrane region" description="Helical" evidence="3">
    <location>
        <begin position="61"/>
        <end position="81"/>
    </location>
</feature>
<feature type="topological domain" description="Cytoplasmic" evidence="3">
    <location>
        <begin position="82"/>
        <end position="85"/>
    </location>
</feature>
<feature type="transmembrane region" description="Helical" evidence="3">
    <location>
        <begin position="86"/>
        <end position="106"/>
    </location>
</feature>
<feature type="topological domain" description="Extracellular" evidence="3">
    <location>
        <begin position="107"/>
        <end position="123"/>
    </location>
</feature>
<feature type="transmembrane region" description="Helical" evidence="3">
    <location>
        <begin position="124"/>
        <end position="144"/>
    </location>
</feature>
<feature type="topological domain" description="Cytoplasmic" evidence="3">
    <location>
        <begin position="145"/>
        <end position="148"/>
    </location>
</feature>
<feature type="transmembrane region" description="Helical" evidence="3">
    <location>
        <begin position="149"/>
        <end position="169"/>
    </location>
</feature>
<feature type="topological domain" description="Extracellular" evidence="3">
    <location>
        <begin position="170"/>
        <end position="177"/>
    </location>
</feature>
<feature type="transmembrane region" description="Helical" evidence="3">
    <location>
        <begin position="178"/>
        <end position="200"/>
    </location>
</feature>
<feature type="topological domain" description="Cytoplasmic" evidence="3">
    <location>
        <begin position="201"/>
        <end position="218"/>
    </location>
</feature>
<feature type="transmembrane region" description="Helical" evidence="3">
    <location>
        <begin position="219"/>
        <end position="239"/>
    </location>
</feature>
<feature type="topological domain" description="Extracellular" evidence="3">
    <location>
        <begin position="240"/>
        <end position="250"/>
    </location>
</feature>
<feature type="transmembrane region" description="Helical" evidence="3">
    <location>
        <begin position="251"/>
        <end position="271"/>
    </location>
</feature>
<feature type="topological domain" description="Cytoplasmic" evidence="3">
    <location>
        <begin position="272"/>
        <end position="281"/>
    </location>
</feature>
<feature type="transmembrane region" description="Helical" evidence="3">
    <location>
        <begin position="282"/>
        <end position="302"/>
    </location>
</feature>
<feature type="topological domain" description="Extracellular" evidence="3">
    <location>
        <position position="303"/>
    </location>
</feature>
<feature type="transmembrane region" description="Helical" evidence="3">
    <location>
        <begin position="304"/>
        <end position="324"/>
    </location>
</feature>
<feature type="topological domain" description="Cytoplasmic" evidence="3">
    <location>
        <begin position="325"/>
        <end position="345"/>
    </location>
</feature>
<feature type="transmembrane region" description="Helical" evidence="3">
    <location>
        <begin position="346"/>
        <end position="366"/>
    </location>
</feature>
<feature type="topological domain" description="Extracellular" evidence="3">
    <location>
        <begin position="367"/>
        <end position="394"/>
    </location>
</feature>
<feature type="transmembrane region" description="Helical" evidence="3">
    <location>
        <begin position="395"/>
        <end position="415"/>
    </location>
</feature>
<feature type="topological domain" description="Cytoplasmic" evidence="3">
    <location>
        <begin position="416"/>
        <end position="479"/>
    </location>
</feature>
<feature type="glycosylation site" description="N-linked (GlcNAc...) asparagine" evidence="3">
    <location>
        <position position="48"/>
    </location>
</feature>
<proteinExistence type="evidence at transcript level"/>
<dbReference type="EMBL" id="AY831675">
    <property type="protein sequence ID" value="AAX39717.1"/>
    <property type="molecule type" value="mRNA"/>
</dbReference>
<dbReference type="RefSeq" id="NP_001030600.1">
    <property type="nucleotide sequence ID" value="NM_001035523.1"/>
</dbReference>
<dbReference type="SMR" id="Q3BCQ7"/>
<dbReference type="FunCoup" id="Q3BCQ7">
    <property type="interactions" value="88"/>
</dbReference>
<dbReference type="STRING" id="9598.ENSPTRP00000054512"/>
<dbReference type="GlyCosmos" id="Q3BCQ7">
    <property type="glycosylation" value="1 site, No reported glycans"/>
</dbReference>
<dbReference type="GeneID" id="453638"/>
<dbReference type="CTD" id="51458"/>
<dbReference type="InParanoid" id="Q3BCQ7"/>
<dbReference type="Proteomes" id="UP000002277">
    <property type="component" value="Unplaced"/>
</dbReference>
<dbReference type="GO" id="GO:0016324">
    <property type="term" value="C:apical plasma membrane"/>
    <property type="evidence" value="ECO:0000250"/>
    <property type="project" value="UniProtKB"/>
</dbReference>
<dbReference type="GO" id="GO:0016323">
    <property type="term" value="C:basolateral plasma membrane"/>
    <property type="evidence" value="ECO:0000250"/>
    <property type="project" value="UniProtKB"/>
</dbReference>
<dbReference type="GO" id="GO:0031410">
    <property type="term" value="C:cytoplasmic vesicle"/>
    <property type="evidence" value="ECO:0000250"/>
    <property type="project" value="UniProtKB"/>
</dbReference>
<dbReference type="GO" id="GO:0005886">
    <property type="term" value="C:plasma membrane"/>
    <property type="evidence" value="ECO:0000250"/>
    <property type="project" value="UniProtKB"/>
</dbReference>
<dbReference type="GO" id="GO:0008519">
    <property type="term" value="F:ammonium channel activity"/>
    <property type="evidence" value="ECO:0000250"/>
    <property type="project" value="UniProtKB"/>
</dbReference>
<dbReference type="GO" id="GO:0030506">
    <property type="term" value="F:ankyrin binding"/>
    <property type="evidence" value="ECO:0000250"/>
    <property type="project" value="UniProtKB"/>
</dbReference>
<dbReference type="GO" id="GO:0035379">
    <property type="term" value="F:carbon dioxide transmembrane transporter activity"/>
    <property type="evidence" value="ECO:0000250"/>
    <property type="project" value="UniProtKB"/>
</dbReference>
<dbReference type="GO" id="GO:0097272">
    <property type="term" value="P:ammonium homeostasis"/>
    <property type="evidence" value="ECO:0000318"/>
    <property type="project" value="GO_Central"/>
</dbReference>
<dbReference type="GO" id="GO:0072488">
    <property type="term" value="P:ammonium transmembrane transport"/>
    <property type="evidence" value="ECO:0000250"/>
    <property type="project" value="UniProtKB"/>
</dbReference>
<dbReference type="GO" id="GO:0006873">
    <property type="term" value="P:intracellular monoatomic ion homeostasis"/>
    <property type="evidence" value="ECO:0000250"/>
    <property type="project" value="UniProtKB"/>
</dbReference>
<dbReference type="GO" id="GO:0070634">
    <property type="term" value="P:transepithelial ammonium transport"/>
    <property type="evidence" value="ECO:0000250"/>
    <property type="project" value="UniProtKB"/>
</dbReference>
<dbReference type="FunFam" id="1.10.3430.10:FF:000001">
    <property type="entry name" value="Ammonium transporter Rh type C"/>
    <property type="match status" value="1"/>
</dbReference>
<dbReference type="Gene3D" id="1.10.3430.10">
    <property type="entry name" value="Ammonium transporter AmtB like domains"/>
    <property type="match status" value="1"/>
</dbReference>
<dbReference type="InterPro" id="IPR029020">
    <property type="entry name" value="Ammonium/urea_transptr"/>
</dbReference>
<dbReference type="InterPro" id="IPR024041">
    <property type="entry name" value="NH4_transpt_AmtB-like_dom"/>
</dbReference>
<dbReference type="InterPro" id="IPR002229">
    <property type="entry name" value="RhesusRHD"/>
</dbReference>
<dbReference type="PANTHER" id="PTHR11730">
    <property type="entry name" value="AMMONIUM TRANSPORTER"/>
    <property type="match status" value="1"/>
</dbReference>
<dbReference type="PANTHER" id="PTHR11730:SF30">
    <property type="entry name" value="AMMONIUM TRANSPORTER RH TYPE C"/>
    <property type="match status" value="1"/>
</dbReference>
<dbReference type="Pfam" id="PF00909">
    <property type="entry name" value="Ammonium_transp"/>
    <property type="match status" value="1"/>
</dbReference>
<dbReference type="PRINTS" id="PR00342">
    <property type="entry name" value="RHESUSRHD"/>
</dbReference>
<dbReference type="SUPFAM" id="SSF111352">
    <property type="entry name" value="Ammonium transporter"/>
    <property type="match status" value="1"/>
</dbReference>
<name>RHCG_PANTR</name>
<reference key="1">
    <citation type="journal article" date="2005" name="Proc. Natl. Acad. Sci. U.S.A.">
        <title>Evolutionary conservation and diversification of Rh family genes and proteins.</title>
        <authorList>
            <person name="Huang C.-H."/>
            <person name="Peng J."/>
        </authorList>
    </citation>
    <scope>NUCLEOTIDE SEQUENCE [MRNA]</scope>
    <source>
        <tissue>Kidney</tissue>
    </source>
</reference>
<comment type="function">
    <text evidence="2">Ammonium transporter involved in the maintenance of acid-base homeostasis. Transports ammonium and its related derivative methylammonium across the plasma membrane of epithelial cells likely contributing to renal transepithelial ammonia transport and ammonia metabolism. Postulated to primarily mediate an electroneutral bidirectional transport of NH3 ammonia species according to a mechanism that implies interaction of an NH4(+) ion with acidic residues of the pore entry followed by dissociation of NH4(+) into NH3 and H(+). As a result NH3 transits through the central pore and is protonated on the extracellular side reforming NH4(+) (By similarity). May act as a CO2 channel providing for renal acid secretion (By similarity).</text>
</comment>
<comment type="catalytic activity">
    <reaction evidence="2">
        <text>NH4(+)(in) = NH4(+)(out)</text>
        <dbReference type="Rhea" id="RHEA:28747"/>
        <dbReference type="ChEBI" id="CHEBI:28938"/>
    </reaction>
    <physiologicalReaction direction="left-to-right" evidence="2">
        <dbReference type="Rhea" id="RHEA:28748"/>
    </physiologicalReaction>
    <physiologicalReaction direction="right-to-left" evidence="2">
        <dbReference type="Rhea" id="RHEA:28749"/>
    </physiologicalReaction>
</comment>
<comment type="catalytic activity">
    <reaction evidence="2">
        <text>methylamine(out) = methylamine(in)</text>
        <dbReference type="Rhea" id="RHEA:74391"/>
        <dbReference type="ChEBI" id="CHEBI:59338"/>
    </reaction>
    <physiologicalReaction direction="left-to-right" evidence="2">
        <dbReference type="Rhea" id="RHEA:74392"/>
    </physiologicalReaction>
</comment>
<comment type="catalytic activity">
    <reaction evidence="2">
        <text>CO2(out) = CO2(in)</text>
        <dbReference type="Rhea" id="RHEA:74891"/>
        <dbReference type="ChEBI" id="CHEBI:16526"/>
    </reaction>
    <physiologicalReaction direction="left-to-right" evidence="2">
        <dbReference type="Rhea" id="RHEA:74892"/>
    </physiologicalReaction>
</comment>
<comment type="subunit">
    <text evidence="2">Homotrimer.</text>
</comment>
<comment type="subcellular location">
    <subcellularLocation>
        <location evidence="2">Cell membrane</location>
        <topology evidence="3">Multi-pass membrane protein</topology>
    </subcellularLocation>
    <subcellularLocation>
        <location evidence="2">Apical cell membrane</location>
        <topology evidence="3">Multi-pass membrane protein</topology>
    </subcellularLocation>
    <text evidence="1">Also detected at the basolateral membrane and in subapical vesicles.</text>
</comment>
<comment type="PTM">
    <text evidence="1">N-glycosylated.</text>
</comment>
<comment type="similarity">
    <text evidence="4">Belongs to the ammonium transporter (TC 2.A.49) family. Rh subfamily.</text>
</comment>
<evidence type="ECO:0000250" key="1"/>
<evidence type="ECO:0000250" key="2">
    <source>
        <dbReference type="UniProtKB" id="Q9UBD6"/>
    </source>
</evidence>
<evidence type="ECO:0000255" key="3"/>
<evidence type="ECO:0000305" key="4"/>
<accession>Q3BCQ7</accession>
<gene>
    <name type="primary">RHCG</name>
</gene>